<name>LACRT_HUMAN</name>
<reference key="1">
    <citation type="journal article" date="2001" name="J. Mol. Biol.">
        <title>cDNA and genomic cloning of lacritin, a novel secretion enhancing factor from the human lacrimal gland.</title>
        <authorList>
            <person name="Sanghi S."/>
            <person name="Kumar R."/>
            <person name="Lumsden A."/>
            <person name="Dickinson D."/>
            <person name="Klepeis V."/>
            <person name="Trinkaus-Randall V."/>
            <person name="Frierson H.F. Jr."/>
            <person name="Laurie G.W."/>
        </authorList>
    </citation>
    <scope>NUCLEOTIDE SEQUENCE [GENOMIC DNA / MRNA]</scope>
    <source>
        <tissue>Lacrimal gland</tissue>
    </source>
</reference>
<reference key="2">
    <citation type="journal article" date="2004" name="Genome Res.">
        <title>The status, quality, and expansion of the NIH full-length cDNA project: the Mammalian Gene Collection (MGC).</title>
        <authorList>
            <consortium name="The MGC Project Team"/>
        </authorList>
    </citation>
    <scope>NUCLEOTIDE SEQUENCE [LARGE SCALE MRNA]</scope>
    <source>
        <tissue>Thyroid</tissue>
    </source>
</reference>
<reference key="3">
    <citation type="journal article" date="2015" name="J. Proteome Res.">
        <title>Human basal tear peptidome characterization by CID, HCD, and ETD followed by in silico and in vitro analyses for antimicrobial peptide identification.</title>
        <authorList>
            <person name="Azkargorta M."/>
            <person name="Soria J."/>
            <person name="Ojeda C."/>
            <person name="Guzman F."/>
            <person name="Acera A."/>
            <person name="Iloro I."/>
            <person name="Suarez T."/>
            <person name="Elortza F."/>
        </authorList>
    </citation>
    <scope>PROTEIN SEQUENCE OF 20-47 AND 87-138</scope>
    <scope>IDENTIFICATION BY MASS SPECTROMETRY</scope>
    <source>
        <tissue>Tear</tissue>
    </source>
</reference>
<reference key="4">
    <citation type="journal article" date="2006" name="J. Proteome Res.">
        <title>Identification of N-linked glycoproteins in human saliva by glycoprotein capture and mass spectrometry.</title>
        <authorList>
            <person name="Ramachandran P."/>
            <person name="Boontheung P."/>
            <person name="Xie Y."/>
            <person name="Sondej M."/>
            <person name="Wong D.T."/>
            <person name="Loo J.A."/>
        </authorList>
    </citation>
    <scope>GLYCOSYLATION [LARGE SCALE ANALYSIS] AT ASN-119</scope>
    <source>
        <tissue>Saliva</tissue>
    </source>
</reference>
<dbReference type="EMBL" id="AY005150">
    <property type="protein sequence ID" value="AAG32949.1"/>
    <property type="molecule type" value="Genomic_DNA"/>
</dbReference>
<dbReference type="EMBL" id="AF238867">
    <property type="protein sequence ID" value="AAG44392.1"/>
    <property type="molecule type" value="mRNA"/>
</dbReference>
<dbReference type="EMBL" id="BC062217">
    <property type="protein sequence ID" value="AAH62217.1"/>
    <property type="molecule type" value="mRNA"/>
</dbReference>
<dbReference type="EMBL" id="BC069317">
    <property type="protein sequence ID" value="AAH69317.1"/>
    <property type="molecule type" value="mRNA"/>
</dbReference>
<dbReference type="CCDS" id="CCDS8883.1"/>
<dbReference type="RefSeq" id="NP_150593.1">
    <property type="nucleotide sequence ID" value="NM_033277.2"/>
</dbReference>
<dbReference type="SMR" id="Q9GZZ8"/>
<dbReference type="BioGRID" id="124659">
    <property type="interactions" value="127"/>
</dbReference>
<dbReference type="FunCoup" id="Q9GZZ8">
    <property type="interactions" value="318"/>
</dbReference>
<dbReference type="IntAct" id="Q9GZZ8">
    <property type="interactions" value="74"/>
</dbReference>
<dbReference type="STRING" id="9606.ENSP00000257867"/>
<dbReference type="GlyCosmos" id="Q9GZZ8">
    <property type="glycosylation" value="1 site, No reported glycans"/>
</dbReference>
<dbReference type="GlyGen" id="Q9GZZ8">
    <property type="glycosylation" value="7 sites, 2 O-linked glycans (6 sites)"/>
</dbReference>
<dbReference type="iPTMnet" id="Q9GZZ8"/>
<dbReference type="PhosphoSitePlus" id="Q9GZZ8"/>
<dbReference type="BioMuta" id="LACRT"/>
<dbReference type="DMDM" id="33301325"/>
<dbReference type="jPOST" id="Q9GZZ8"/>
<dbReference type="MassIVE" id="Q9GZZ8"/>
<dbReference type="PaxDb" id="9606-ENSP00000257867"/>
<dbReference type="PeptideAtlas" id="Q9GZZ8"/>
<dbReference type="ProteomicsDB" id="80188"/>
<dbReference type="Pumba" id="Q9GZZ8"/>
<dbReference type="Antibodypedia" id="43570">
    <property type="antibodies" value="34 antibodies from 11 providers"/>
</dbReference>
<dbReference type="DNASU" id="90070"/>
<dbReference type="Ensembl" id="ENST00000257867.5">
    <property type="protein sequence ID" value="ENSP00000257867.4"/>
    <property type="gene ID" value="ENSG00000135413.9"/>
</dbReference>
<dbReference type="GeneID" id="90070"/>
<dbReference type="KEGG" id="hsa:90070"/>
<dbReference type="MANE-Select" id="ENST00000257867.5">
    <property type="protein sequence ID" value="ENSP00000257867.4"/>
    <property type="RefSeq nucleotide sequence ID" value="NM_033277.2"/>
    <property type="RefSeq protein sequence ID" value="NP_150593.1"/>
</dbReference>
<dbReference type="UCSC" id="uc001sgi.2">
    <property type="organism name" value="human"/>
</dbReference>
<dbReference type="AGR" id="HGNC:16430"/>
<dbReference type="CTD" id="90070"/>
<dbReference type="DisGeNET" id="90070"/>
<dbReference type="GeneCards" id="LACRT"/>
<dbReference type="HGNC" id="HGNC:16430">
    <property type="gene designation" value="LACRT"/>
</dbReference>
<dbReference type="HPA" id="ENSG00000135413">
    <property type="expression patterns" value="Tissue enriched (salivary)"/>
</dbReference>
<dbReference type="MIM" id="607360">
    <property type="type" value="gene"/>
</dbReference>
<dbReference type="neXtProt" id="NX_Q9GZZ8"/>
<dbReference type="OpenTargets" id="ENSG00000135413"/>
<dbReference type="PharmGKB" id="PA30261"/>
<dbReference type="VEuPathDB" id="HostDB:ENSG00000135413"/>
<dbReference type="eggNOG" id="ENOG502TDZH">
    <property type="taxonomic scope" value="Eukaryota"/>
</dbReference>
<dbReference type="GeneTree" id="ENSGT00940000163391"/>
<dbReference type="HOGENOM" id="CLU_1864409_0_0_1"/>
<dbReference type="InParanoid" id="Q9GZZ8"/>
<dbReference type="OMA" id="GKQFFEG"/>
<dbReference type="OrthoDB" id="9808145at2759"/>
<dbReference type="PAN-GO" id="Q9GZZ8">
    <property type="GO annotations" value="5 GO annotations based on evolutionary models"/>
</dbReference>
<dbReference type="PhylomeDB" id="Q9GZZ8"/>
<dbReference type="TreeFam" id="TF340896"/>
<dbReference type="PathwayCommons" id="Q9GZZ8"/>
<dbReference type="SignaLink" id="Q9GZZ8"/>
<dbReference type="BioGRID-ORCS" id="90070">
    <property type="hits" value="12 hits in 1150 CRISPR screens"/>
</dbReference>
<dbReference type="ChiTaRS" id="LACRT">
    <property type="organism name" value="human"/>
</dbReference>
<dbReference type="GeneWiki" id="Lacritin"/>
<dbReference type="GenomeRNAi" id="90070"/>
<dbReference type="Pharos" id="Q9GZZ8">
    <property type="development level" value="Tbio"/>
</dbReference>
<dbReference type="PRO" id="PR:Q9GZZ8"/>
<dbReference type="Proteomes" id="UP000005640">
    <property type="component" value="Chromosome 12"/>
</dbReference>
<dbReference type="RNAct" id="Q9GZZ8">
    <property type="molecule type" value="protein"/>
</dbReference>
<dbReference type="Bgee" id="ENSG00000135413">
    <property type="expression patterns" value="Expressed in lacrimal gland and 21 other cell types or tissues"/>
</dbReference>
<dbReference type="ExpressionAtlas" id="Q9GZZ8">
    <property type="expression patterns" value="baseline and differential"/>
</dbReference>
<dbReference type="GO" id="GO:0005576">
    <property type="term" value="C:extracellular region"/>
    <property type="evidence" value="ECO:0000314"/>
    <property type="project" value="UniProtKB"/>
</dbReference>
<dbReference type="GO" id="GO:0005615">
    <property type="term" value="C:extracellular space"/>
    <property type="evidence" value="ECO:0007005"/>
    <property type="project" value="UniProtKB"/>
</dbReference>
<dbReference type="GO" id="GO:0030141">
    <property type="term" value="C:secretory granule"/>
    <property type="evidence" value="ECO:0000314"/>
    <property type="project" value="UniProtKB"/>
</dbReference>
<dbReference type="GO" id="GO:0005518">
    <property type="term" value="F:collagen binding"/>
    <property type="evidence" value="ECO:0000314"/>
    <property type="project" value="UniProtKB"/>
</dbReference>
<dbReference type="GO" id="GO:0008083">
    <property type="term" value="F:growth factor activity"/>
    <property type="evidence" value="ECO:0000314"/>
    <property type="project" value="UniProtKB"/>
</dbReference>
<dbReference type="GO" id="GO:0043237">
    <property type="term" value="F:laminin-1 binding"/>
    <property type="evidence" value="ECO:0000314"/>
    <property type="project" value="UniProtKB"/>
</dbReference>
<dbReference type="GO" id="GO:0033173">
    <property type="term" value="P:calcineurin-NFAT signaling cascade"/>
    <property type="evidence" value="ECO:0000314"/>
    <property type="project" value="UniProtKB"/>
</dbReference>
<dbReference type="GO" id="GO:0019722">
    <property type="term" value="P:calcium-mediated signaling"/>
    <property type="evidence" value="ECO:0000314"/>
    <property type="project" value="UniProtKB"/>
</dbReference>
<dbReference type="GO" id="GO:0042742">
    <property type="term" value="P:defense response to bacterium"/>
    <property type="evidence" value="ECO:0000314"/>
    <property type="project" value="FlyBase"/>
</dbReference>
<dbReference type="GO" id="GO:0010669">
    <property type="term" value="P:epithelial structure maintenance"/>
    <property type="evidence" value="ECO:0000314"/>
    <property type="project" value="FlyBase"/>
</dbReference>
<dbReference type="GO" id="GO:0043066">
    <property type="term" value="P:negative regulation of apoptotic process"/>
    <property type="evidence" value="ECO:0000314"/>
    <property type="project" value="FlyBase"/>
</dbReference>
<dbReference type="GO" id="GO:0031665">
    <property type="term" value="P:negative regulation of lipopolysaccharide-mediated signaling pathway"/>
    <property type="evidence" value="ECO:0000314"/>
    <property type="project" value="FlyBase"/>
</dbReference>
<dbReference type="GO" id="GO:0070886">
    <property type="term" value="P:positive regulation of calcineurin-NFAT signaling cascade"/>
    <property type="evidence" value="ECO:0000314"/>
    <property type="project" value="UniProtKB"/>
</dbReference>
<dbReference type="GO" id="GO:0050850">
    <property type="term" value="P:positive regulation of calcium-mediated signaling"/>
    <property type="evidence" value="ECO:0000314"/>
    <property type="project" value="FlyBase"/>
</dbReference>
<dbReference type="GO" id="GO:0008284">
    <property type="term" value="P:positive regulation of cell population proliferation"/>
    <property type="evidence" value="ECO:0000314"/>
    <property type="project" value="UniProtKB"/>
</dbReference>
<dbReference type="GO" id="GO:0050679">
    <property type="term" value="P:positive regulation of epithelial cell proliferation"/>
    <property type="evidence" value="ECO:0000314"/>
    <property type="project" value="UniProtKB"/>
</dbReference>
<dbReference type="GO" id="GO:0060054">
    <property type="term" value="P:positive regulation of epithelial cell proliferation involved in wound healing"/>
    <property type="evidence" value="ECO:0000314"/>
    <property type="project" value="FlyBase"/>
</dbReference>
<dbReference type="GO" id="GO:0016239">
    <property type="term" value="P:positive regulation of macroautophagy"/>
    <property type="evidence" value="ECO:0000314"/>
    <property type="project" value="FlyBase"/>
</dbReference>
<dbReference type="GO" id="GO:0050731">
    <property type="term" value="P:positive regulation of peptidyl-tyrosine phosphorylation"/>
    <property type="evidence" value="ECO:0000314"/>
    <property type="project" value="UniProtKB"/>
</dbReference>
<dbReference type="GO" id="GO:0051281">
    <property type="term" value="P:positive regulation of release of sequestered calcium ion into cytosol"/>
    <property type="evidence" value="ECO:0000314"/>
    <property type="project" value="UniProtKB"/>
</dbReference>
<dbReference type="GO" id="GO:0051047">
    <property type="term" value="P:positive regulation of secretion"/>
    <property type="evidence" value="ECO:0000314"/>
    <property type="project" value="UniProtKB"/>
</dbReference>
<dbReference type="GO" id="GO:0034067">
    <property type="term" value="P:protein localization to Golgi apparatus"/>
    <property type="evidence" value="ECO:0000314"/>
    <property type="project" value="UniProtKB"/>
</dbReference>
<dbReference type="GO" id="GO:0070075">
    <property type="term" value="P:tear secretion"/>
    <property type="evidence" value="ECO:0000314"/>
    <property type="project" value="FlyBase"/>
</dbReference>
<dbReference type="InterPro" id="IPR043557">
    <property type="entry name" value="Dermcidin/Lacritin"/>
</dbReference>
<dbReference type="PANTHER" id="PTHR40711">
    <property type="entry name" value="DERMCIDIN-RELATED"/>
    <property type="match status" value="1"/>
</dbReference>
<dbReference type="PANTHER" id="PTHR40711:SF2">
    <property type="entry name" value="EXTRACELLULAR GLYCOPROTEIN LACRITIN"/>
    <property type="match status" value="1"/>
</dbReference>
<sequence>MKFTTLLFLAAVAGALVYAEDASSDSTGADPAQEAGTSKPNEEISGPAEPASPPETTTTAQETSAAAVQGTAKVTSSRQELNPLKSIVEKSILLTEQALAKAGKGMHGGVPGGKQFIENGSEFAQKLLKKFSLLKPWA</sequence>
<comment type="function">
    <text>Modulates secretion by lacrimal acinar cells.</text>
</comment>
<comment type="subcellular location">
    <subcellularLocation>
        <location>Secreted</location>
    </subcellularLocation>
</comment>
<comment type="tissue specificity">
    <text>Expressed in secretory granules of many acinar cells in lacrimal gland and in scattered acinar cells of salivary glands.</text>
</comment>
<keyword id="KW-0903">Direct protein sequencing</keyword>
<keyword id="KW-0325">Glycoprotein</keyword>
<keyword id="KW-1267">Proteomics identification</keyword>
<keyword id="KW-1185">Reference proteome</keyword>
<keyword id="KW-0964">Secreted</keyword>
<keyword id="KW-0732">Signal</keyword>
<evidence type="ECO:0000256" key="1">
    <source>
        <dbReference type="SAM" id="MobiDB-lite"/>
    </source>
</evidence>
<evidence type="ECO:0000269" key="2">
    <source>
    </source>
</evidence>
<evidence type="ECO:0000269" key="3">
    <source>
    </source>
</evidence>
<organism>
    <name type="scientific">Homo sapiens</name>
    <name type="common">Human</name>
    <dbReference type="NCBI Taxonomy" id="9606"/>
    <lineage>
        <taxon>Eukaryota</taxon>
        <taxon>Metazoa</taxon>
        <taxon>Chordata</taxon>
        <taxon>Craniata</taxon>
        <taxon>Vertebrata</taxon>
        <taxon>Euteleostomi</taxon>
        <taxon>Mammalia</taxon>
        <taxon>Eutheria</taxon>
        <taxon>Euarchontoglires</taxon>
        <taxon>Primates</taxon>
        <taxon>Haplorrhini</taxon>
        <taxon>Catarrhini</taxon>
        <taxon>Hominidae</taxon>
        <taxon>Homo</taxon>
    </lineage>
</organism>
<gene>
    <name type="primary">LACRT</name>
</gene>
<protein>
    <recommendedName>
        <fullName>Extracellular glycoprotein lacritin</fullName>
    </recommendedName>
</protein>
<proteinExistence type="evidence at protein level"/>
<feature type="signal peptide" evidence="3">
    <location>
        <begin position="1"/>
        <end position="19"/>
    </location>
</feature>
<feature type="chain" id="PRO_0000021574" description="Extracellular glycoprotein lacritin">
    <location>
        <begin position="20"/>
        <end position="138"/>
    </location>
</feature>
<feature type="region of interest" description="Disordered" evidence="1">
    <location>
        <begin position="20"/>
        <end position="79"/>
    </location>
</feature>
<feature type="compositionally biased region" description="Low complexity" evidence="1">
    <location>
        <begin position="43"/>
        <end position="67"/>
    </location>
</feature>
<feature type="glycosylation site" description="N-linked (GlcNAc...) asparagine" evidence="2">
    <location>
        <position position="119"/>
    </location>
</feature>
<accession>Q9GZZ8</accession>